<sequence length="161" mass="17822">MLSSSPTSFTHPFLSSSPPLSPISPPSRTARISPPLVSASCSYTYTEDSPRLHQIPRRLTTVPASLYDVLEVPLGATSQDIKSAYRRLARICHPDVAGTDRTSSSSADEFMKIHAAYCTLSDPEKRSVYDRRMLRRSRPLTVGTSGLGSYVGRNWETDQCW</sequence>
<proteinExistence type="evidence at protein level"/>
<reference key="1">
    <citation type="journal article" date="2001" name="Plant Mol. Biol.">
        <title>A novel plastid-targeted J-domain protein in Arabidopsis thaliana.</title>
        <authorList>
            <person name="Orme W."/>
            <person name="Walker A.R."/>
            <person name="Gupta R."/>
            <person name="Gray J.C."/>
        </authorList>
    </citation>
    <scope>NUCLEOTIDE SEQUENCE [MRNA]</scope>
    <scope>PROTEIN SEQUENCE OF 37-55</scope>
    <scope>TISSUE SPECIFICITY</scope>
    <scope>SUBCELLULAR LOCATION</scope>
    <source>
        <strain>cv. Columbia</strain>
    </source>
</reference>
<reference key="2">
    <citation type="journal article" date="1999" name="Nature">
        <title>Sequence and analysis of chromosome 4 of the plant Arabidopsis thaliana.</title>
        <authorList>
            <person name="Mayer K.F.X."/>
            <person name="Schueller C."/>
            <person name="Wambutt R."/>
            <person name="Murphy G."/>
            <person name="Volckaert G."/>
            <person name="Pohl T."/>
            <person name="Duesterhoeft A."/>
            <person name="Stiekema W."/>
            <person name="Entian K.-D."/>
            <person name="Terryn N."/>
            <person name="Harris B."/>
            <person name="Ansorge W."/>
            <person name="Brandt P."/>
            <person name="Grivell L.A."/>
            <person name="Rieger M."/>
            <person name="Weichselgartner M."/>
            <person name="de Simone V."/>
            <person name="Obermaier B."/>
            <person name="Mache R."/>
            <person name="Mueller M."/>
            <person name="Kreis M."/>
            <person name="Delseny M."/>
            <person name="Puigdomenech P."/>
            <person name="Watson M."/>
            <person name="Schmidtheini T."/>
            <person name="Reichert B."/>
            <person name="Portetelle D."/>
            <person name="Perez-Alonso M."/>
            <person name="Boutry M."/>
            <person name="Bancroft I."/>
            <person name="Vos P."/>
            <person name="Hoheisel J."/>
            <person name="Zimmermann W."/>
            <person name="Wedler H."/>
            <person name="Ridley P."/>
            <person name="Langham S.-A."/>
            <person name="McCullagh B."/>
            <person name="Bilham L."/>
            <person name="Robben J."/>
            <person name="van der Schueren J."/>
            <person name="Grymonprez B."/>
            <person name="Chuang Y.-J."/>
            <person name="Vandenbussche F."/>
            <person name="Braeken M."/>
            <person name="Weltjens I."/>
            <person name="Voet M."/>
            <person name="Bastiaens I."/>
            <person name="Aert R."/>
            <person name="Defoor E."/>
            <person name="Weitzenegger T."/>
            <person name="Bothe G."/>
            <person name="Ramsperger U."/>
            <person name="Hilbert H."/>
            <person name="Braun M."/>
            <person name="Holzer E."/>
            <person name="Brandt A."/>
            <person name="Peters S."/>
            <person name="van Staveren M."/>
            <person name="Dirkse W."/>
            <person name="Mooijman P."/>
            <person name="Klein Lankhorst R."/>
            <person name="Rose M."/>
            <person name="Hauf J."/>
            <person name="Koetter P."/>
            <person name="Berneiser S."/>
            <person name="Hempel S."/>
            <person name="Feldpausch M."/>
            <person name="Lamberth S."/>
            <person name="Van den Daele H."/>
            <person name="De Keyser A."/>
            <person name="Buysshaert C."/>
            <person name="Gielen J."/>
            <person name="Villarroel R."/>
            <person name="De Clercq R."/>
            <person name="van Montagu M."/>
            <person name="Rogers J."/>
            <person name="Cronin A."/>
            <person name="Quail M.A."/>
            <person name="Bray-Allen S."/>
            <person name="Clark L."/>
            <person name="Doggett J."/>
            <person name="Hall S."/>
            <person name="Kay M."/>
            <person name="Lennard N."/>
            <person name="McLay K."/>
            <person name="Mayes R."/>
            <person name="Pettett A."/>
            <person name="Rajandream M.A."/>
            <person name="Lyne M."/>
            <person name="Benes V."/>
            <person name="Rechmann S."/>
            <person name="Borkova D."/>
            <person name="Bloecker H."/>
            <person name="Scharfe M."/>
            <person name="Grimm M."/>
            <person name="Loehnert T.-H."/>
            <person name="Dose S."/>
            <person name="de Haan M."/>
            <person name="Maarse A.C."/>
            <person name="Schaefer M."/>
            <person name="Mueller-Auer S."/>
            <person name="Gabel C."/>
            <person name="Fuchs M."/>
            <person name="Fartmann B."/>
            <person name="Granderath K."/>
            <person name="Dauner D."/>
            <person name="Herzl A."/>
            <person name="Neumann S."/>
            <person name="Argiriou A."/>
            <person name="Vitale D."/>
            <person name="Liguori R."/>
            <person name="Piravandi E."/>
            <person name="Massenet O."/>
            <person name="Quigley F."/>
            <person name="Clabauld G."/>
            <person name="Muendlein A."/>
            <person name="Felber R."/>
            <person name="Schnabl S."/>
            <person name="Hiller R."/>
            <person name="Schmidt W."/>
            <person name="Lecharny A."/>
            <person name="Aubourg S."/>
            <person name="Chefdor F."/>
            <person name="Cooke R."/>
            <person name="Berger C."/>
            <person name="Monfort A."/>
            <person name="Casacuberta E."/>
            <person name="Gibbons T."/>
            <person name="Weber N."/>
            <person name="Vandenbol M."/>
            <person name="Bargues M."/>
            <person name="Terol J."/>
            <person name="Torres A."/>
            <person name="Perez-Perez A."/>
            <person name="Purnelle B."/>
            <person name="Bent E."/>
            <person name="Johnson S."/>
            <person name="Tacon D."/>
            <person name="Jesse T."/>
            <person name="Heijnen L."/>
            <person name="Schwarz S."/>
            <person name="Scholler P."/>
            <person name="Heber S."/>
            <person name="Francs P."/>
            <person name="Bielke C."/>
            <person name="Frishman D."/>
            <person name="Haase D."/>
            <person name="Lemcke K."/>
            <person name="Mewes H.-W."/>
            <person name="Stocker S."/>
            <person name="Zaccaria P."/>
            <person name="Bevan M."/>
            <person name="Wilson R.K."/>
            <person name="de la Bastide M."/>
            <person name="Habermann K."/>
            <person name="Parnell L."/>
            <person name="Dedhia N."/>
            <person name="Gnoj L."/>
            <person name="Schutz K."/>
            <person name="Huang E."/>
            <person name="Spiegel L."/>
            <person name="Sekhon M."/>
            <person name="Murray J."/>
            <person name="Sheet P."/>
            <person name="Cordes M."/>
            <person name="Abu-Threideh J."/>
            <person name="Stoneking T."/>
            <person name="Kalicki J."/>
            <person name="Graves T."/>
            <person name="Harmon G."/>
            <person name="Edwards J."/>
            <person name="Latreille P."/>
            <person name="Courtney L."/>
            <person name="Cloud J."/>
            <person name="Abbott A."/>
            <person name="Scott K."/>
            <person name="Johnson D."/>
            <person name="Minx P."/>
            <person name="Bentley D."/>
            <person name="Fulton B."/>
            <person name="Miller N."/>
            <person name="Greco T."/>
            <person name="Kemp K."/>
            <person name="Kramer J."/>
            <person name="Fulton L."/>
            <person name="Mardis E."/>
            <person name="Dante M."/>
            <person name="Pepin K."/>
            <person name="Hillier L.W."/>
            <person name="Nelson J."/>
            <person name="Spieth J."/>
            <person name="Ryan E."/>
            <person name="Andrews S."/>
            <person name="Geisel C."/>
            <person name="Layman D."/>
            <person name="Du H."/>
            <person name="Ali J."/>
            <person name="Berghoff A."/>
            <person name="Jones K."/>
            <person name="Drone K."/>
            <person name="Cotton M."/>
            <person name="Joshu C."/>
            <person name="Antonoiu B."/>
            <person name="Zidanic M."/>
            <person name="Strong C."/>
            <person name="Sun H."/>
            <person name="Lamar B."/>
            <person name="Yordan C."/>
            <person name="Ma P."/>
            <person name="Zhong J."/>
            <person name="Preston R."/>
            <person name="Vil D."/>
            <person name="Shekher M."/>
            <person name="Matero A."/>
            <person name="Shah R."/>
            <person name="Swaby I.K."/>
            <person name="O'Shaughnessy A."/>
            <person name="Rodriguez M."/>
            <person name="Hoffman J."/>
            <person name="Till S."/>
            <person name="Granat S."/>
            <person name="Shohdy N."/>
            <person name="Hasegawa A."/>
            <person name="Hameed A."/>
            <person name="Lodhi M."/>
            <person name="Johnson A."/>
            <person name="Chen E."/>
            <person name="Marra M.A."/>
            <person name="Martienssen R."/>
            <person name="McCombie W.R."/>
        </authorList>
    </citation>
    <scope>NUCLEOTIDE SEQUENCE [LARGE SCALE GENOMIC DNA]</scope>
    <source>
        <strain>cv. Columbia</strain>
    </source>
</reference>
<reference key="3">
    <citation type="journal article" date="2017" name="Plant J.">
        <title>Araport11: a complete reannotation of the Arabidopsis thaliana reference genome.</title>
        <authorList>
            <person name="Cheng C.Y."/>
            <person name="Krishnakumar V."/>
            <person name="Chan A.P."/>
            <person name="Thibaud-Nissen F."/>
            <person name="Schobel S."/>
            <person name="Town C.D."/>
        </authorList>
    </citation>
    <scope>GENOME REANNOTATION</scope>
    <source>
        <strain>cv. Columbia</strain>
    </source>
</reference>
<reference key="4">
    <citation type="journal article" date="2001" name="Cell Stress Chaperones">
        <title>The J-domain proteins of Arabidopsis thaliana: an unexpectedly large and diverse family of chaperones.</title>
        <authorList>
            <person name="Miernyk J.A."/>
        </authorList>
    </citation>
    <scope>GENE FAMILY</scope>
    <scope>NOMENCLATURE</scope>
</reference>
<keyword id="KW-0143">Chaperone</keyword>
<keyword id="KW-0150">Chloroplast</keyword>
<keyword id="KW-0903">Direct protein sequencing</keyword>
<keyword id="KW-0934">Plastid</keyword>
<keyword id="KW-1185">Reference proteome</keyword>
<keyword id="KW-0809">Transit peptide</keyword>
<evidence type="ECO:0000250" key="1"/>
<evidence type="ECO:0000255" key="2">
    <source>
        <dbReference type="PROSITE-ProRule" id="PRU00286"/>
    </source>
</evidence>
<evidence type="ECO:0000256" key="3">
    <source>
        <dbReference type="SAM" id="MobiDB-lite"/>
    </source>
</evidence>
<evidence type="ECO:0000269" key="4">
    <source>
    </source>
</evidence>
<evidence type="ECO:0000305" key="5"/>
<name>DNJ11_ARATH</name>
<organism>
    <name type="scientific">Arabidopsis thaliana</name>
    <name type="common">Mouse-ear cress</name>
    <dbReference type="NCBI Taxonomy" id="3702"/>
    <lineage>
        <taxon>Eukaryota</taxon>
        <taxon>Viridiplantae</taxon>
        <taxon>Streptophyta</taxon>
        <taxon>Embryophyta</taxon>
        <taxon>Tracheophyta</taxon>
        <taxon>Spermatophyta</taxon>
        <taxon>Magnoliopsida</taxon>
        <taxon>eudicotyledons</taxon>
        <taxon>Gunneridae</taxon>
        <taxon>Pentapetalae</taxon>
        <taxon>rosids</taxon>
        <taxon>malvids</taxon>
        <taxon>Brassicales</taxon>
        <taxon>Brassicaceae</taxon>
        <taxon>Camelineae</taxon>
        <taxon>Arabidopsis</taxon>
    </lineage>
</organism>
<protein>
    <recommendedName>
        <fullName>Chaperone protein dnaJ 11, chloroplastic</fullName>
        <shortName>AtDjC11</shortName>
        <shortName>AtJ11</shortName>
    </recommendedName>
</protein>
<feature type="transit peptide" description="Chloroplast" evidence="4">
    <location>
        <begin position="1"/>
        <end position="36"/>
    </location>
</feature>
<feature type="chain" id="PRO_0000007266" description="Chaperone protein dnaJ 11, chloroplastic">
    <location>
        <begin position="37"/>
        <end position="161"/>
    </location>
</feature>
<feature type="domain" description="J" evidence="2">
    <location>
        <begin position="65"/>
        <end position="133"/>
    </location>
</feature>
<feature type="region of interest" description="Disordered" evidence="3">
    <location>
        <begin position="1"/>
        <end position="31"/>
    </location>
</feature>
<feature type="compositionally biased region" description="Low complexity" evidence="3">
    <location>
        <begin position="1"/>
        <end position="18"/>
    </location>
</feature>
<feature type="sequence conflict" description="In Ref. 1; CAC03599." evidence="5" ref="1">
    <original>S</original>
    <variation>R</variation>
    <location>
        <position position="149"/>
    </location>
</feature>
<comment type="function">
    <text evidence="1">Plays a continuous role in plant development probably in the structural organization of compartments.</text>
</comment>
<comment type="subcellular location">
    <subcellularLocation>
        <location evidence="4">Plastid</location>
        <location evidence="4">Chloroplast stroma</location>
    </subcellularLocation>
    <text>Probably also in other plastids.</text>
</comment>
<comment type="tissue specificity">
    <text evidence="4">Expressed in roots, stems, leaves, flowers and developing siliques.</text>
</comment>
<comment type="similarity">
    <text evidence="5">Belongs to the DnaJ family. C/III subfamily.</text>
</comment>
<accession>Q9FYB5</accession>
<accession>O65641</accession>
<gene>
    <name type="primary">ATJ11</name>
    <name type="synonym">C11</name>
    <name type="synonym">J11</name>
    <name type="ordered locus">At4g36040</name>
    <name type="ORF">T19K4.170</name>
</gene>
<dbReference type="EMBL" id="AJ292973">
    <property type="protein sequence ID" value="CAC03599.1"/>
    <property type="molecule type" value="mRNA"/>
</dbReference>
<dbReference type="EMBL" id="AL022373">
    <property type="protein sequence ID" value="CAA18498.1"/>
    <property type="molecule type" value="Genomic_DNA"/>
</dbReference>
<dbReference type="EMBL" id="AL161588">
    <property type="protein sequence ID" value="CAB81513.1"/>
    <property type="molecule type" value="Genomic_DNA"/>
</dbReference>
<dbReference type="EMBL" id="CP002687">
    <property type="protein sequence ID" value="AEE86605.1"/>
    <property type="molecule type" value="Genomic_DNA"/>
</dbReference>
<dbReference type="PIR" id="T05496">
    <property type="entry name" value="T05496"/>
</dbReference>
<dbReference type="RefSeq" id="NP_195328.1">
    <property type="nucleotide sequence ID" value="NM_119771.4"/>
</dbReference>
<dbReference type="SMR" id="Q9FYB5"/>
<dbReference type="FunCoup" id="Q9FYB5">
    <property type="interactions" value="520"/>
</dbReference>
<dbReference type="STRING" id="3702.Q9FYB5"/>
<dbReference type="PaxDb" id="3702-AT4G36040.1"/>
<dbReference type="ProteomicsDB" id="222078"/>
<dbReference type="EnsemblPlants" id="AT4G36040.1">
    <property type="protein sequence ID" value="AT4G36040.1"/>
    <property type="gene ID" value="AT4G36040"/>
</dbReference>
<dbReference type="GeneID" id="829760"/>
<dbReference type="Gramene" id="AT4G36040.1">
    <property type="protein sequence ID" value="AT4G36040.1"/>
    <property type="gene ID" value="AT4G36040"/>
</dbReference>
<dbReference type="KEGG" id="ath:AT4G36040"/>
<dbReference type="Araport" id="AT4G36040"/>
<dbReference type="TAIR" id="AT4G36040">
    <property type="gene designation" value="J11"/>
</dbReference>
<dbReference type="eggNOG" id="KOG0712">
    <property type="taxonomic scope" value="Eukaryota"/>
</dbReference>
<dbReference type="HOGENOM" id="CLU_017633_9_1_1"/>
<dbReference type="InParanoid" id="Q9FYB5"/>
<dbReference type="OMA" id="DRICRPR"/>
<dbReference type="OrthoDB" id="445556at2759"/>
<dbReference type="PhylomeDB" id="Q9FYB5"/>
<dbReference type="PRO" id="PR:Q9FYB5"/>
<dbReference type="Proteomes" id="UP000006548">
    <property type="component" value="Chromosome 4"/>
</dbReference>
<dbReference type="ExpressionAtlas" id="Q9FYB5">
    <property type="expression patterns" value="baseline and differential"/>
</dbReference>
<dbReference type="GO" id="GO:0009507">
    <property type="term" value="C:chloroplast"/>
    <property type="evidence" value="ECO:0000314"/>
    <property type="project" value="TAIR"/>
</dbReference>
<dbReference type="GO" id="GO:0009570">
    <property type="term" value="C:chloroplast stroma"/>
    <property type="evidence" value="ECO:0007669"/>
    <property type="project" value="UniProtKB-SubCell"/>
</dbReference>
<dbReference type="GO" id="GO:0005634">
    <property type="term" value="C:nucleus"/>
    <property type="evidence" value="ECO:0000314"/>
    <property type="project" value="TAIR"/>
</dbReference>
<dbReference type="GO" id="GO:0009536">
    <property type="term" value="C:plastid"/>
    <property type="evidence" value="ECO:0007005"/>
    <property type="project" value="TAIR"/>
</dbReference>
<dbReference type="CDD" id="cd06257">
    <property type="entry name" value="DnaJ"/>
    <property type="match status" value="1"/>
</dbReference>
<dbReference type="FunFam" id="1.10.287.110:FF:000091">
    <property type="entry name" value="Chaperone protein DNAJ, putative"/>
    <property type="match status" value="1"/>
</dbReference>
<dbReference type="Gene3D" id="1.10.287.110">
    <property type="entry name" value="DnaJ domain"/>
    <property type="match status" value="1"/>
</dbReference>
<dbReference type="InterPro" id="IPR052276">
    <property type="entry name" value="Diphthamide-biosynth_chaperone"/>
</dbReference>
<dbReference type="InterPro" id="IPR001623">
    <property type="entry name" value="DnaJ_domain"/>
</dbReference>
<dbReference type="InterPro" id="IPR036869">
    <property type="entry name" value="J_dom_sf"/>
</dbReference>
<dbReference type="PANTHER" id="PTHR44240:SF15">
    <property type="entry name" value="CHAPERONE PROTEIN DNAJ 11, CHLOROPLASTIC"/>
    <property type="match status" value="1"/>
</dbReference>
<dbReference type="PANTHER" id="PTHR44240">
    <property type="entry name" value="DNAJ DOMAIN (PROKARYOTIC HEAT SHOCK PROTEIN)-RELATED"/>
    <property type="match status" value="1"/>
</dbReference>
<dbReference type="Pfam" id="PF00226">
    <property type="entry name" value="DnaJ"/>
    <property type="match status" value="1"/>
</dbReference>
<dbReference type="PRINTS" id="PR00625">
    <property type="entry name" value="JDOMAIN"/>
</dbReference>
<dbReference type="SMART" id="SM00271">
    <property type="entry name" value="DnaJ"/>
    <property type="match status" value="1"/>
</dbReference>
<dbReference type="SUPFAM" id="SSF46565">
    <property type="entry name" value="Chaperone J-domain"/>
    <property type="match status" value="1"/>
</dbReference>
<dbReference type="PROSITE" id="PS50076">
    <property type="entry name" value="DNAJ_2"/>
    <property type="match status" value="1"/>
</dbReference>